<name>REG3G_HUMAN</name>
<evidence type="ECO:0000250" key="1">
    <source>
        <dbReference type="UniProtKB" id="O09049"/>
    </source>
</evidence>
<evidence type="ECO:0000250" key="2">
    <source>
        <dbReference type="UniProtKB" id="P42854"/>
    </source>
</evidence>
<evidence type="ECO:0000250" key="3">
    <source>
        <dbReference type="UniProtKB" id="Q06141"/>
    </source>
</evidence>
<evidence type="ECO:0000255" key="4">
    <source>
        <dbReference type="PROSITE-ProRule" id="PRU00040"/>
    </source>
</evidence>
<evidence type="ECO:0000269" key="5">
    <source>
    </source>
</evidence>
<evidence type="ECO:0000269" key="6">
    <source>
    </source>
</evidence>
<evidence type="ECO:0000269" key="7">
    <source>
    </source>
</evidence>
<evidence type="ECO:0000269" key="8">
    <source>
    </source>
</evidence>
<evidence type="ECO:0000303" key="9">
    <source>
    </source>
</evidence>
<evidence type="ECO:0000305" key="10"/>
<evidence type="ECO:0000312" key="11">
    <source>
        <dbReference type="HGNC" id="HGNC:29595"/>
    </source>
</evidence>
<organism>
    <name type="scientific">Homo sapiens</name>
    <name type="common">Human</name>
    <dbReference type="NCBI Taxonomy" id="9606"/>
    <lineage>
        <taxon>Eukaryota</taxon>
        <taxon>Metazoa</taxon>
        <taxon>Chordata</taxon>
        <taxon>Craniata</taxon>
        <taxon>Vertebrata</taxon>
        <taxon>Euteleostomi</taxon>
        <taxon>Mammalia</taxon>
        <taxon>Eutheria</taxon>
        <taxon>Euarchontoglires</taxon>
        <taxon>Primates</taxon>
        <taxon>Haplorrhini</taxon>
        <taxon>Catarrhini</taxon>
        <taxon>Hominidae</taxon>
        <taxon>Homo</taxon>
    </lineage>
</organism>
<gene>
    <name evidence="11" type="primary">REG3G</name>
    <name type="synonym">PAP1B</name>
    <name type="ORF">UNQ429/PRO162</name>
</gene>
<keyword id="KW-0011">Acute phase</keyword>
<keyword id="KW-0025">Alternative splicing</keyword>
<keyword id="KW-0929">Antimicrobial</keyword>
<keyword id="KW-0963">Cytoplasm</keyword>
<keyword id="KW-0903">Direct protein sequencing</keyword>
<keyword id="KW-1015">Disulfide bond</keyword>
<keyword id="KW-0395">Inflammatory response</keyword>
<keyword id="KW-0430">Lectin</keyword>
<keyword id="KW-0479">Metal-binding</keyword>
<keyword id="KW-1267">Proteomics identification</keyword>
<keyword id="KW-1185">Reference proteome</keyword>
<keyword id="KW-0964">Secreted</keyword>
<keyword id="KW-0732">Signal</keyword>
<keyword id="KW-0862">Zinc</keyword>
<comment type="function">
    <text evidence="8">Bactericidal C-type lectin which acts exclusively against Gram-positive bacteria and mediates bacterial killing by binding to surface-exposed carbohydrate moieties of peptidoglycan. Restricts bacterial colonization of the intestinal epithelial surface and consequently limits activation of adaptive immune responses by the microbiota.</text>
</comment>
<comment type="function">
    <text evidence="1">Acts as a hormone in response to different stimuli like anti-inflammatory signals, such as IL17A, or gut microbiome. Is secreted by different cell types to activate its receptor EXTL3 and induce cell specific signaling pathways. Induced by IL17A in keratinocytes, regulates keratinocyte proliferation and differentiation after skin injury. In parallel, inhibits skin inflammation through the inhibition of inflammatory cytokines such as IL6 and TNF. Induced by IL22 in lung epithelial cells, inhibits cytokine production and regulates allergic airway inflammation. Induced in small intestine by inulin-enriched diet and Lactobacillus gasseri enriched microbiome, plays a role in the improvement of gut barrier function, the regulation of energy balance and glucose levels. Modulates microbiota composition in duodenal contents. Produced by nociceptor in response to endotoxins, prevents endotoxic death by targeting kynurenine pathway in microglia.</text>
</comment>
<comment type="function">
    <molecule>Regenerating islet-derived protein 3-gamma 16.5 kDa form</molecule>
    <text evidence="8">Has bacteriostatic activity.</text>
</comment>
<comment type="function">
    <molecule>Regenerating islet-derived protein 3-gamma 15 kDa form</molecule>
    <text evidence="8">Has bactericidal activity against L.monocytogenes and methicillin-resistant S.aureus.</text>
</comment>
<comment type="activity regulation">
    <molecule>Regenerating islet-derived protein 3-gamma 15 kDa form</molecule>
    <text evidence="3">Lipopolysaccharide inhibits pore-forming activity, explaining why is bactericidal for Gram-positive but not Gram-negative bacteria.</text>
</comment>
<comment type="subunit">
    <molecule>Regenerating islet-derived protein 3-gamma 15 kDa form</molecule>
    <text evidence="3">Forms a hexameric membrane-permeabilizing oligomeric pore on membrane phospholipids. The hexamer is formed by three dimers related by helical symmetry. Forms filaments, filamentation traps pore complexes and limits damage to host cells. Interacts with EXTL3.</text>
</comment>
<comment type="subcellular location">
    <subcellularLocation>
        <location evidence="2">Secreted</location>
    </subcellularLocation>
    <subcellularLocation>
        <location evidence="2">Cytoplasm</location>
    </subcellularLocation>
</comment>
<comment type="alternative products">
    <event type="alternative splicing"/>
    <isoform>
        <id>Q6UW15-1</id>
        <name>1</name>
        <sequence type="displayed"/>
    </isoform>
    <isoform>
        <id>Q6UW15-2</id>
        <name>2</name>
        <sequence type="described" ref="VSP_045169"/>
    </isoform>
</comment>
<comment type="tissue specificity">
    <text evidence="6 7">Predominantly expressed in pancreas, where it may be restricted to exocrine pancreas. Moderate expression levels in testis and weak in heart, kidney and placenta.</text>
</comment>
<comment type="domain">
    <text evidence="3">The EPN motif is essential for recognition of the peptidoglycan carbohydrate backbone and for efficient bacterial killing with Glu-114 playing a key role in peptidoglycan binding and bactericidal activity.</text>
</comment>
<comment type="PTM">
    <text evidence="8">Proteolytic processing by trypsin removes an inhibitory N-terminal propeptide and is essential for peptidoglycan binding and antibacterial activity.</text>
</comment>
<feature type="signal peptide" evidence="5 8">
    <location>
        <begin position="1"/>
        <end position="26"/>
    </location>
</feature>
<feature type="chain" id="PRO_0000017434" description="Regenerating islet-derived protein 3-gamma 16.5 kDa form">
    <location>
        <begin position="27"/>
        <end position="175"/>
    </location>
</feature>
<feature type="propeptide" id="PRO_0000422751" evidence="8">
    <location>
        <begin position="27"/>
        <end position="37"/>
    </location>
</feature>
<feature type="chain" id="PRO_0000422752" description="Regenerating islet-derived protein 3-gamma 15 kDa form">
    <location>
        <begin position="38"/>
        <end position="175"/>
    </location>
</feature>
<feature type="domain" description="C-type lectin" evidence="4">
    <location>
        <begin position="47"/>
        <end position="172"/>
    </location>
</feature>
<feature type="region of interest" description="Sufficient to activate EXTL3" evidence="3">
    <location>
        <begin position="103"/>
        <end position="118"/>
    </location>
</feature>
<feature type="short sequence motif" description="EPN" evidence="3">
    <location>
        <begin position="114"/>
        <end position="116"/>
    </location>
</feature>
<feature type="binding site" evidence="3">
    <location>
        <position position="107"/>
    </location>
    <ligand>
        <name>Zn(2+)</name>
        <dbReference type="ChEBI" id="CHEBI:29105"/>
    </ligand>
</feature>
<feature type="binding site" evidence="3">
    <location>
        <position position="121"/>
    </location>
    <ligand>
        <name>Zn(2+)</name>
        <dbReference type="ChEBI" id="CHEBI:29105"/>
    </ligand>
</feature>
<feature type="binding site" evidence="3">
    <location>
        <position position="145"/>
    </location>
    <ligand>
        <name>Zn(2+)</name>
        <dbReference type="ChEBI" id="CHEBI:29105"/>
    </ligand>
</feature>
<feature type="disulfide bond" evidence="4">
    <location>
        <begin position="40"/>
        <end position="51"/>
    </location>
</feature>
<feature type="disulfide bond" evidence="4">
    <location>
        <begin position="68"/>
        <end position="171"/>
    </location>
</feature>
<feature type="disulfide bond" evidence="4">
    <location>
        <begin position="146"/>
        <end position="163"/>
    </location>
</feature>
<feature type="splice variant" id="VSP_045169" description="In isoform 2." evidence="9">
    <location>
        <begin position="66"/>
        <end position="111"/>
    </location>
</feature>
<feature type="sequence conflict" description="In Ref. 4; CAG46736." evidence="10" ref="4">
    <original>K</original>
    <variation>T</variation>
    <location>
        <position position="174"/>
    </location>
</feature>
<sequence length="175" mass="19330">MLPPMALPSVSWMLLSCLILLCQVQGEETQKELPSPRISCPKGSKAYGSPCYALFLSPKSWMDADLACQKRPSGKLVSVLSGAEGSFVSSLVRSISNSYSYIWIGLHDPTQGSEPDGDGWEWSSTDVMNYFAWEKNPSTILNPGHCGSLSRSTGFLKWKDYNCDAKLPYVCKFKD</sequence>
<reference key="1">
    <citation type="journal article" date="2004" name="Gene">
        <title>Molecular cloning, expression and chromosomal localization of a novel human REG family gene, REG III.</title>
        <authorList>
            <person name="Nata K."/>
            <person name="Liu Y."/>
            <person name="Xu L."/>
            <person name="Ikeda T."/>
            <person name="Akiyama T."/>
            <person name="Noguchi N."/>
            <person name="Kawaguchi S."/>
            <person name="Yamauchi A."/>
            <person name="Takahashi I."/>
            <person name="Shervani N.J."/>
            <person name="Onogawa T."/>
            <person name="Takasawa S."/>
            <person name="Okamoto H."/>
        </authorList>
    </citation>
    <scope>NUCLEOTIDE SEQUENCE [MRNA] (ISOFORM 1)</scope>
    <scope>TISSUE SPECIFICITY</scope>
    <source>
        <tissue>Pancreas</tissue>
    </source>
</reference>
<reference key="2">
    <citation type="journal article" date="2005" name="Biochim. Biophys. Acta">
        <title>PAP IB, a new member of the Reg gene family: cloning, expression, structural properties, and evolution by gene duplication.</title>
        <authorList>
            <person name="Laurine E."/>
            <person name="Manival X."/>
            <person name="Montgelard C."/>
            <person name="Bideau C."/>
            <person name="Berge-Lefranc J.-L."/>
            <person name="Erard M."/>
            <person name="Verdier J.-M."/>
        </authorList>
    </citation>
    <scope>NUCLEOTIDE SEQUENCE [MRNA] (ISOFORM 1)</scope>
    <scope>TISSUE SPECIFICITY</scope>
</reference>
<reference key="3">
    <citation type="journal article" date="2003" name="Genome Res.">
        <title>The secreted protein discovery initiative (SPDI), a large-scale effort to identify novel human secreted and transmembrane proteins: a bioinformatics assessment.</title>
        <authorList>
            <person name="Clark H.F."/>
            <person name="Gurney A.L."/>
            <person name="Abaya E."/>
            <person name="Baker K."/>
            <person name="Baldwin D.T."/>
            <person name="Brush J."/>
            <person name="Chen J."/>
            <person name="Chow B."/>
            <person name="Chui C."/>
            <person name="Crowley C."/>
            <person name="Currell B."/>
            <person name="Deuel B."/>
            <person name="Dowd P."/>
            <person name="Eaton D."/>
            <person name="Foster J.S."/>
            <person name="Grimaldi C."/>
            <person name="Gu Q."/>
            <person name="Hass P.E."/>
            <person name="Heldens S."/>
            <person name="Huang A."/>
            <person name="Kim H.S."/>
            <person name="Klimowski L."/>
            <person name="Jin Y."/>
            <person name="Johnson S."/>
            <person name="Lee J."/>
            <person name="Lewis L."/>
            <person name="Liao D."/>
            <person name="Mark M.R."/>
            <person name="Robbie E."/>
            <person name="Sanchez C."/>
            <person name="Schoenfeld J."/>
            <person name="Seshagiri S."/>
            <person name="Simmons L."/>
            <person name="Singh J."/>
            <person name="Smith V."/>
            <person name="Stinson J."/>
            <person name="Vagts A."/>
            <person name="Vandlen R.L."/>
            <person name="Watanabe C."/>
            <person name="Wieand D."/>
            <person name="Woods K."/>
            <person name="Xie M.-H."/>
            <person name="Yansura D.G."/>
            <person name="Yi S."/>
            <person name="Yu G."/>
            <person name="Yuan J."/>
            <person name="Zhang M."/>
            <person name="Zhang Z."/>
            <person name="Goddard A.D."/>
            <person name="Wood W.I."/>
            <person name="Godowski P.J."/>
            <person name="Gray A.M."/>
        </authorList>
    </citation>
    <scope>NUCLEOTIDE SEQUENCE [LARGE SCALE MRNA] (ISOFORM 1)</scope>
</reference>
<reference key="4">
    <citation type="submission" date="2004-06" db="EMBL/GenBank/DDBJ databases">
        <title>Cloning of human full open reading frames in Gateway(TM) system entry vector (pDONR201).</title>
        <authorList>
            <person name="Halleck A."/>
            <person name="Ebert L."/>
            <person name="Mkoundinya M."/>
            <person name="Schick M."/>
            <person name="Eisenstein S."/>
            <person name="Neubert P."/>
            <person name="Kstrang K."/>
            <person name="Schatten R."/>
            <person name="Shen B."/>
            <person name="Henze S."/>
            <person name="Mar W."/>
            <person name="Korn B."/>
            <person name="Zuo D."/>
            <person name="Hu Y."/>
            <person name="LaBaer J."/>
        </authorList>
    </citation>
    <scope>NUCLEOTIDE SEQUENCE [LARGE SCALE MRNA] (ISOFORM 1)</scope>
</reference>
<reference key="5">
    <citation type="journal article" date="2004" name="Nat. Genet.">
        <title>Complete sequencing and characterization of 21,243 full-length human cDNAs.</title>
        <authorList>
            <person name="Ota T."/>
            <person name="Suzuki Y."/>
            <person name="Nishikawa T."/>
            <person name="Otsuki T."/>
            <person name="Sugiyama T."/>
            <person name="Irie R."/>
            <person name="Wakamatsu A."/>
            <person name="Hayashi K."/>
            <person name="Sato H."/>
            <person name="Nagai K."/>
            <person name="Kimura K."/>
            <person name="Makita H."/>
            <person name="Sekine M."/>
            <person name="Obayashi M."/>
            <person name="Nishi T."/>
            <person name="Shibahara T."/>
            <person name="Tanaka T."/>
            <person name="Ishii S."/>
            <person name="Yamamoto J."/>
            <person name="Saito K."/>
            <person name="Kawai Y."/>
            <person name="Isono Y."/>
            <person name="Nakamura Y."/>
            <person name="Nagahari K."/>
            <person name="Murakami K."/>
            <person name="Yasuda T."/>
            <person name="Iwayanagi T."/>
            <person name="Wagatsuma M."/>
            <person name="Shiratori A."/>
            <person name="Sudo H."/>
            <person name="Hosoiri T."/>
            <person name="Kaku Y."/>
            <person name="Kodaira H."/>
            <person name="Kondo H."/>
            <person name="Sugawara M."/>
            <person name="Takahashi M."/>
            <person name="Kanda K."/>
            <person name="Yokoi T."/>
            <person name="Furuya T."/>
            <person name="Kikkawa E."/>
            <person name="Omura Y."/>
            <person name="Abe K."/>
            <person name="Kamihara K."/>
            <person name="Katsuta N."/>
            <person name="Sato K."/>
            <person name="Tanikawa M."/>
            <person name="Yamazaki M."/>
            <person name="Ninomiya K."/>
            <person name="Ishibashi T."/>
            <person name="Yamashita H."/>
            <person name="Murakawa K."/>
            <person name="Fujimori K."/>
            <person name="Tanai H."/>
            <person name="Kimata M."/>
            <person name="Watanabe M."/>
            <person name="Hiraoka S."/>
            <person name="Chiba Y."/>
            <person name="Ishida S."/>
            <person name="Ono Y."/>
            <person name="Takiguchi S."/>
            <person name="Watanabe S."/>
            <person name="Yosida M."/>
            <person name="Hotuta T."/>
            <person name="Kusano J."/>
            <person name="Kanehori K."/>
            <person name="Takahashi-Fujii A."/>
            <person name="Hara H."/>
            <person name="Tanase T.-O."/>
            <person name="Nomura Y."/>
            <person name="Togiya S."/>
            <person name="Komai F."/>
            <person name="Hara R."/>
            <person name="Takeuchi K."/>
            <person name="Arita M."/>
            <person name="Imose N."/>
            <person name="Musashino K."/>
            <person name="Yuuki H."/>
            <person name="Oshima A."/>
            <person name="Sasaki N."/>
            <person name="Aotsuka S."/>
            <person name="Yoshikawa Y."/>
            <person name="Matsunawa H."/>
            <person name="Ichihara T."/>
            <person name="Shiohata N."/>
            <person name="Sano S."/>
            <person name="Moriya S."/>
            <person name="Momiyama H."/>
            <person name="Satoh N."/>
            <person name="Takami S."/>
            <person name="Terashima Y."/>
            <person name="Suzuki O."/>
            <person name="Nakagawa S."/>
            <person name="Senoh A."/>
            <person name="Mizoguchi H."/>
            <person name="Goto Y."/>
            <person name="Shimizu F."/>
            <person name="Wakebe H."/>
            <person name="Hishigaki H."/>
            <person name="Watanabe T."/>
            <person name="Sugiyama A."/>
            <person name="Takemoto M."/>
            <person name="Kawakami B."/>
            <person name="Yamazaki M."/>
            <person name="Watanabe K."/>
            <person name="Kumagai A."/>
            <person name="Itakura S."/>
            <person name="Fukuzumi Y."/>
            <person name="Fujimori Y."/>
            <person name="Komiyama M."/>
            <person name="Tashiro H."/>
            <person name="Tanigami A."/>
            <person name="Fujiwara T."/>
            <person name="Ono T."/>
            <person name="Yamada K."/>
            <person name="Fujii Y."/>
            <person name="Ozaki K."/>
            <person name="Hirao M."/>
            <person name="Ohmori Y."/>
            <person name="Kawabata A."/>
            <person name="Hikiji T."/>
            <person name="Kobatake N."/>
            <person name="Inagaki H."/>
            <person name="Ikema Y."/>
            <person name="Okamoto S."/>
            <person name="Okitani R."/>
            <person name="Kawakami T."/>
            <person name="Noguchi S."/>
            <person name="Itoh T."/>
            <person name="Shigeta K."/>
            <person name="Senba T."/>
            <person name="Matsumura K."/>
            <person name="Nakajima Y."/>
            <person name="Mizuno T."/>
            <person name="Morinaga M."/>
            <person name="Sasaki M."/>
            <person name="Togashi T."/>
            <person name="Oyama M."/>
            <person name="Hata H."/>
            <person name="Watanabe M."/>
            <person name="Komatsu T."/>
            <person name="Mizushima-Sugano J."/>
            <person name="Satoh T."/>
            <person name="Shirai Y."/>
            <person name="Takahashi Y."/>
            <person name="Nakagawa K."/>
            <person name="Okumura K."/>
            <person name="Nagase T."/>
            <person name="Nomura N."/>
            <person name="Kikuchi H."/>
            <person name="Masuho Y."/>
            <person name="Yamashita R."/>
            <person name="Nakai K."/>
            <person name="Yada T."/>
            <person name="Nakamura Y."/>
            <person name="Ohara O."/>
            <person name="Isogai T."/>
            <person name="Sugano S."/>
        </authorList>
    </citation>
    <scope>NUCLEOTIDE SEQUENCE [LARGE SCALE MRNA] (ISOFORM 1)</scope>
    <source>
        <tissue>Testis</tissue>
    </source>
</reference>
<reference key="6">
    <citation type="journal article" date="2005" name="Nature">
        <title>Generation and annotation of the DNA sequences of human chromosomes 2 and 4.</title>
        <authorList>
            <person name="Hillier L.W."/>
            <person name="Graves T.A."/>
            <person name="Fulton R.S."/>
            <person name="Fulton L.A."/>
            <person name="Pepin K.H."/>
            <person name="Minx P."/>
            <person name="Wagner-McPherson C."/>
            <person name="Layman D."/>
            <person name="Wylie K."/>
            <person name="Sekhon M."/>
            <person name="Becker M.C."/>
            <person name="Fewell G.A."/>
            <person name="Delehaunty K.D."/>
            <person name="Miner T.L."/>
            <person name="Nash W.E."/>
            <person name="Kremitzki C."/>
            <person name="Oddy L."/>
            <person name="Du H."/>
            <person name="Sun H."/>
            <person name="Bradshaw-Cordum H."/>
            <person name="Ali J."/>
            <person name="Carter J."/>
            <person name="Cordes M."/>
            <person name="Harris A."/>
            <person name="Isak A."/>
            <person name="van Brunt A."/>
            <person name="Nguyen C."/>
            <person name="Du F."/>
            <person name="Courtney L."/>
            <person name="Kalicki J."/>
            <person name="Ozersky P."/>
            <person name="Abbott S."/>
            <person name="Armstrong J."/>
            <person name="Belter E.A."/>
            <person name="Caruso L."/>
            <person name="Cedroni M."/>
            <person name="Cotton M."/>
            <person name="Davidson T."/>
            <person name="Desai A."/>
            <person name="Elliott G."/>
            <person name="Erb T."/>
            <person name="Fronick C."/>
            <person name="Gaige T."/>
            <person name="Haakenson W."/>
            <person name="Haglund K."/>
            <person name="Holmes A."/>
            <person name="Harkins R."/>
            <person name="Kim K."/>
            <person name="Kruchowski S.S."/>
            <person name="Strong C.M."/>
            <person name="Grewal N."/>
            <person name="Goyea E."/>
            <person name="Hou S."/>
            <person name="Levy A."/>
            <person name="Martinka S."/>
            <person name="Mead K."/>
            <person name="McLellan M.D."/>
            <person name="Meyer R."/>
            <person name="Randall-Maher J."/>
            <person name="Tomlinson C."/>
            <person name="Dauphin-Kohlberg S."/>
            <person name="Kozlowicz-Reilly A."/>
            <person name="Shah N."/>
            <person name="Swearengen-Shahid S."/>
            <person name="Snider J."/>
            <person name="Strong J.T."/>
            <person name="Thompson J."/>
            <person name="Yoakum M."/>
            <person name="Leonard S."/>
            <person name="Pearman C."/>
            <person name="Trani L."/>
            <person name="Radionenko M."/>
            <person name="Waligorski J.E."/>
            <person name="Wang C."/>
            <person name="Rock S.M."/>
            <person name="Tin-Wollam A.-M."/>
            <person name="Maupin R."/>
            <person name="Latreille P."/>
            <person name="Wendl M.C."/>
            <person name="Yang S.-P."/>
            <person name="Pohl C."/>
            <person name="Wallis J.W."/>
            <person name="Spieth J."/>
            <person name="Bieri T.A."/>
            <person name="Berkowicz N."/>
            <person name="Nelson J.O."/>
            <person name="Osborne J."/>
            <person name="Ding L."/>
            <person name="Meyer R."/>
            <person name="Sabo A."/>
            <person name="Shotland Y."/>
            <person name="Sinha P."/>
            <person name="Wohldmann P.E."/>
            <person name="Cook L.L."/>
            <person name="Hickenbotham M.T."/>
            <person name="Eldred J."/>
            <person name="Williams D."/>
            <person name="Jones T.A."/>
            <person name="She X."/>
            <person name="Ciccarelli F.D."/>
            <person name="Izaurralde E."/>
            <person name="Taylor J."/>
            <person name="Schmutz J."/>
            <person name="Myers R.M."/>
            <person name="Cox D.R."/>
            <person name="Huang X."/>
            <person name="McPherson J.D."/>
            <person name="Mardis E.R."/>
            <person name="Clifton S.W."/>
            <person name="Warren W.C."/>
            <person name="Chinwalla A.T."/>
            <person name="Eddy S.R."/>
            <person name="Marra M.A."/>
            <person name="Ovcharenko I."/>
            <person name="Furey T.S."/>
            <person name="Miller W."/>
            <person name="Eichler E.E."/>
            <person name="Bork P."/>
            <person name="Suyama M."/>
            <person name="Torrents D."/>
            <person name="Waterston R.H."/>
            <person name="Wilson R.K."/>
        </authorList>
    </citation>
    <scope>NUCLEOTIDE SEQUENCE [LARGE SCALE GENOMIC DNA]</scope>
</reference>
<reference key="7">
    <citation type="submission" date="2005-09" db="EMBL/GenBank/DDBJ databases">
        <authorList>
            <person name="Mural R.J."/>
            <person name="Istrail S."/>
            <person name="Sutton G.G."/>
            <person name="Florea L."/>
            <person name="Halpern A.L."/>
            <person name="Mobarry C.M."/>
            <person name="Lippert R."/>
            <person name="Walenz B."/>
            <person name="Shatkay H."/>
            <person name="Dew I."/>
            <person name="Miller J.R."/>
            <person name="Flanigan M.J."/>
            <person name="Edwards N.J."/>
            <person name="Bolanos R."/>
            <person name="Fasulo D."/>
            <person name="Halldorsson B.V."/>
            <person name="Hannenhalli S."/>
            <person name="Turner R."/>
            <person name="Yooseph S."/>
            <person name="Lu F."/>
            <person name="Nusskern D.R."/>
            <person name="Shue B.C."/>
            <person name="Zheng X.H."/>
            <person name="Zhong F."/>
            <person name="Delcher A.L."/>
            <person name="Huson D.H."/>
            <person name="Kravitz S.A."/>
            <person name="Mouchard L."/>
            <person name="Reinert K."/>
            <person name="Remington K.A."/>
            <person name="Clark A.G."/>
            <person name="Waterman M.S."/>
            <person name="Eichler E.E."/>
            <person name="Adams M.D."/>
            <person name="Hunkapiller M.W."/>
            <person name="Myers E.W."/>
            <person name="Venter J.C."/>
        </authorList>
    </citation>
    <scope>NUCLEOTIDE SEQUENCE [LARGE SCALE GENOMIC DNA]</scope>
</reference>
<reference key="8">
    <citation type="journal article" date="2004" name="Genome Res.">
        <title>The status, quality, and expansion of the NIH full-length cDNA project: the Mammalian Gene Collection (MGC).</title>
        <authorList>
            <consortium name="The MGC Project Team"/>
        </authorList>
    </citation>
    <scope>NUCLEOTIDE SEQUENCE [LARGE SCALE MRNA] (ISOFORMS 1 AND 2)</scope>
</reference>
<reference key="9">
    <citation type="journal article" date="2009" name="J. Biol. Chem.">
        <title>Regulation of C-type lectin antimicrobial activity by a flexible N-terminal prosegment.</title>
        <authorList>
            <person name="Mukherjee S."/>
            <person name="Partch C.L."/>
            <person name="Lehotzky R.E."/>
            <person name="Whitham C.V."/>
            <person name="Chu H."/>
            <person name="Bevins C.L."/>
            <person name="Gardner K.H."/>
            <person name="Hooper L.V."/>
        </authorList>
    </citation>
    <scope>PROTEIN SEQUENCE OF N-TERMINUS</scope>
    <scope>STRUCTURE BY NMR</scope>
    <scope>FUNCTION</scope>
    <scope>PROTEOLYTIC PROCESSING</scope>
</reference>
<reference key="10">
    <citation type="journal article" date="2004" name="Protein Sci.">
        <title>Signal peptide prediction based on analysis of experimentally verified cleavage sites.</title>
        <authorList>
            <person name="Zhang Z."/>
            <person name="Henzel W.J."/>
        </authorList>
    </citation>
    <scope>PROTEIN SEQUENCE OF 27-41</scope>
</reference>
<protein>
    <recommendedName>
        <fullName evidence="10">Regenerating islet-derived protein 3-gamma</fullName>
        <shortName>REG-3-gamma</shortName>
    </recommendedName>
    <alternativeName>
        <fullName>Pancreatitis-associated protein 1B</fullName>
        <shortName>PAP-1B</shortName>
    </alternativeName>
    <alternativeName>
        <fullName>Pancreatitis-associated protein IB</fullName>
        <shortName>PAP IB</shortName>
    </alternativeName>
    <alternativeName>
        <fullName>Regenerating islet-derived protein III-gamma</fullName>
        <shortName>REG III</shortName>
        <shortName>Reg III-gamma</shortName>
    </alternativeName>
    <component>
        <recommendedName>
            <fullName>Regenerating islet-derived protein 3-gamma 16.5 kDa form</fullName>
        </recommendedName>
    </component>
    <component>
        <recommendedName>
            <fullName>Regenerating islet-derived protein 3-gamma 15 kDa form</fullName>
        </recommendedName>
    </component>
</protein>
<proteinExistence type="evidence at protein level"/>
<dbReference type="EMBL" id="AB161037">
    <property type="protein sequence ID" value="BAD51394.1"/>
    <property type="molecule type" value="mRNA"/>
</dbReference>
<dbReference type="EMBL" id="AB161038">
    <property type="protein sequence ID" value="BAD51396.1"/>
    <property type="molecule type" value="mRNA"/>
</dbReference>
<dbReference type="EMBL" id="AY428734">
    <property type="protein sequence ID" value="AAR88147.1"/>
    <property type="molecule type" value="mRNA"/>
</dbReference>
<dbReference type="EMBL" id="AY359047">
    <property type="protein sequence ID" value="AAQ89406.1"/>
    <property type="molecule type" value="mRNA"/>
</dbReference>
<dbReference type="EMBL" id="CR541938">
    <property type="protein sequence ID" value="CAG46736.1"/>
    <property type="molecule type" value="mRNA"/>
</dbReference>
<dbReference type="EMBL" id="AB161039">
    <property type="protein sequence ID" value="BAD51395.1"/>
    <property type="molecule type" value="Genomic_DNA"/>
</dbReference>
<dbReference type="EMBL" id="AK292595">
    <property type="protein sequence ID" value="BAF85284.1"/>
    <property type="molecule type" value="mRNA"/>
</dbReference>
<dbReference type="EMBL" id="AC017004">
    <property type="protein sequence ID" value="AAX88840.1"/>
    <property type="molecule type" value="Genomic_DNA"/>
</dbReference>
<dbReference type="EMBL" id="CH471053">
    <property type="protein sequence ID" value="EAW99580.1"/>
    <property type="molecule type" value="Genomic_DNA"/>
</dbReference>
<dbReference type="EMBL" id="CH471053">
    <property type="protein sequence ID" value="EAW99581.1"/>
    <property type="molecule type" value="Genomic_DNA"/>
</dbReference>
<dbReference type="EMBL" id="BC103852">
    <property type="protein sequence ID" value="AAI03853.1"/>
    <property type="molecule type" value="mRNA"/>
</dbReference>
<dbReference type="EMBL" id="BC103853">
    <property type="protein sequence ID" value="AAI03854.1"/>
    <property type="molecule type" value="mRNA"/>
</dbReference>
<dbReference type="EMBL" id="BC103854">
    <property type="protein sequence ID" value="AAI03855.1"/>
    <property type="molecule type" value="mRNA"/>
</dbReference>
<dbReference type="CCDS" id="CCDS1962.1">
    <molecule id="Q6UW15-1"/>
</dbReference>
<dbReference type="CCDS" id="CCDS58714.1">
    <molecule id="Q6UW15-2"/>
</dbReference>
<dbReference type="RefSeq" id="NP_001008388.1">
    <molecule id="Q6UW15-1"/>
    <property type="nucleotide sequence ID" value="NM_001008387.3"/>
</dbReference>
<dbReference type="RefSeq" id="NP_001256969.1">
    <molecule id="Q6UW15-2"/>
    <property type="nucleotide sequence ID" value="NM_001270040.2"/>
</dbReference>
<dbReference type="RefSeq" id="NP_940850.1">
    <molecule id="Q6UW15-1"/>
    <property type="nucleotide sequence ID" value="NM_198448.4"/>
</dbReference>
<dbReference type="RefSeq" id="XP_005264192.1">
    <molecule id="Q6UW15-1"/>
    <property type="nucleotide sequence ID" value="XM_005264135.3"/>
</dbReference>
<dbReference type="RefSeq" id="XP_024308461.1">
    <molecule id="Q6UW15-2"/>
    <property type="nucleotide sequence ID" value="XM_024452693.2"/>
</dbReference>
<dbReference type="RefSeq" id="XP_024308462.1">
    <molecule id="Q6UW15-2"/>
    <property type="nucleotide sequence ID" value="XM_024452694.2"/>
</dbReference>
<dbReference type="RefSeq" id="XP_054196488.1">
    <molecule id="Q6UW15-1"/>
    <property type="nucleotide sequence ID" value="XM_054340513.1"/>
</dbReference>
<dbReference type="RefSeq" id="XP_054196489.1">
    <molecule id="Q6UW15-2"/>
    <property type="nucleotide sequence ID" value="XM_054340514.1"/>
</dbReference>
<dbReference type="RefSeq" id="XP_054196490.1">
    <molecule id="Q6UW15-2"/>
    <property type="nucleotide sequence ID" value="XM_054340515.1"/>
</dbReference>
<dbReference type="SMR" id="Q6UW15"/>
<dbReference type="BioGRID" id="126224">
    <property type="interactions" value="2"/>
</dbReference>
<dbReference type="FunCoup" id="Q6UW15">
    <property type="interactions" value="42"/>
</dbReference>
<dbReference type="STRING" id="9606.ENSP00000272324"/>
<dbReference type="BioMuta" id="REG3G"/>
<dbReference type="DMDM" id="68565895"/>
<dbReference type="MassIVE" id="Q6UW15"/>
<dbReference type="PaxDb" id="9606-ENSP00000272324"/>
<dbReference type="PeptideAtlas" id="Q6UW15"/>
<dbReference type="ProteomicsDB" id="61859"/>
<dbReference type="ProteomicsDB" id="67443">
    <molecule id="Q6UW15-1"/>
</dbReference>
<dbReference type="Antibodypedia" id="52910">
    <property type="antibodies" value="233 antibodies from 20 providers"/>
</dbReference>
<dbReference type="DNASU" id="130120"/>
<dbReference type="Ensembl" id="ENST00000272324.10">
    <molecule id="Q6UW15-1"/>
    <property type="protein sequence ID" value="ENSP00000272324.5"/>
    <property type="gene ID" value="ENSG00000143954.13"/>
</dbReference>
<dbReference type="Ensembl" id="ENST00000393897.6">
    <molecule id="Q6UW15-1"/>
    <property type="protein sequence ID" value="ENSP00000377475.2"/>
    <property type="gene ID" value="ENSG00000143954.13"/>
</dbReference>
<dbReference type="Ensembl" id="ENST00000409471.1">
    <molecule id="Q6UW15-2"/>
    <property type="protein sequence ID" value="ENSP00000387105.1"/>
    <property type="gene ID" value="ENSG00000143954.13"/>
</dbReference>
<dbReference type="GeneID" id="130120"/>
<dbReference type="KEGG" id="hsa:130120"/>
<dbReference type="MANE-Select" id="ENST00000272324.10">
    <property type="protein sequence ID" value="ENSP00000272324.5"/>
    <property type="RefSeq nucleotide sequence ID" value="NM_001008387.3"/>
    <property type="RefSeq protein sequence ID" value="NP_001008388.1"/>
</dbReference>
<dbReference type="UCSC" id="uc002snw.5">
    <molecule id="Q6UW15-1"/>
    <property type="organism name" value="human"/>
</dbReference>
<dbReference type="AGR" id="HGNC:29595"/>
<dbReference type="CTD" id="130120"/>
<dbReference type="DisGeNET" id="130120"/>
<dbReference type="GeneCards" id="REG3G"/>
<dbReference type="HGNC" id="HGNC:29595">
    <property type="gene designation" value="REG3G"/>
</dbReference>
<dbReference type="HPA" id="ENSG00000143954">
    <property type="expression patterns" value="Tissue enriched (pancreas)"/>
</dbReference>
<dbReference type="MIM" id="609933">
    <property type="type" value="gene"/>
</dbReference>
<dbReference type="neXtProt" id="NX_Q6UW15"/>
<dbReference type="OpenTargets" id="ENSG00000143954"/>
<dbReference type="PharmGKB" id="PA142671087"/>
<dbReference type="VEuPathDB" id="HostDB:ENSG00000143954"/>
<dbReference type="eggNOG" id="KOG4297">
    <property type="taxonomic scope" value="Eukaryota"/>
</dbReference>
<dbReference type="GeneTree" id="ENSGT00940000162300"/>
<dbReference type="HOGENOM" id="CLU_049894_18_0_1"/>
<dbReference type="InParanoid" id="Q6UW15"/>
<dbReference type="OMA" id="NCNARLP"/>
<dbReference type="OrthoDB" id="418245at2759"/>
<dbReference type="PAN-GO" id="Q6UW15">
    <property type="GO annotations" value="8 GO annotations based on evolutionary models"/>
</dbReference>
<dbReference type="PhylomeDB" id="Q6UW15"/>
<dbReference type="PathwayCommons" id="Q6UW15"/>
<dbReference type="Reactome" id="R-HSA-6803157">
    <property type="pathway name" value="Antimicrobial peptides"/>
</dbReference>
<dbReference type="BioGRID-ORCS" id="130120">
    <property type="hits" value="10 hits in 1106 CRISPR screens"/>
</dbReference>
<dbReference type="GeneWiki" id="REG3G"/>
<dbReference type="GenomeRNAi" id="130120"/>
<dbReference type="Pharos" id="Q6UW15">
    <property type="development level" value="Tbio"/>
</dbReference>
<dbReference type="PRO" id="PR:Q6UW15"/>
<dbReference type="Proteomes" id="UP000005640">
    <property type="component" value="Chromosome 2"/>
</dbReference>
<dbReference type="RNAct" id="Q6UW15">
    <property type="molecule type" value="protein"/>
</dbReference>
<dbReference type="Bgee" id="ENSG00000143954">
    <property type="expression patterns" value="Expressed in body of pancreas and 112 other cell types or tissues"/>
</dbReference>
<dbReference type="GO" id="GO:0005737">
    <property type="term" value="C:cytoplasm"/>
    <property type="evidence" value="ECO:0007669"/>
    <property type="project" value="UniProtKB-SubCell"/>
</dbReference>
<dbReference type="GO" id="GO:0005576">
    <property type="term" value="C:extracellular region"/>
    <property type="evidence" value="ECO:0000304"/>
    <property type="project" value="Reactome"/>
</dbReference>
<dbReference type="GO" id="GO:0005615">
    <property type="term" value="C:extracellular space"/>
    <property type="evidence" value="ECO:0000318"/>
    <property type="project" value="GO_Central"/>
</dbReference>
<dbReference type="GO" id="GO:0046872">
    <property type="term" value="F:metal ion binding"/>
    <property type="evidence" value="ECO:0007669"/>
    <property type="project" value="UniProtKB-KW"/>
</dbReference>
<dbReference type="GO" id="GO:0070492">
    <property type="term" value="F:oligosaccharide binding"/>
    <property type="evidence" value="ECO:0000314"/>
    <property type="project" value="UniProtKB"/>
</dbReference>
<dbReference type="GO" id="GO:0042834">
    <property type="term" value="F:peptidoglycan binding"/>
    <property type="evidence" value="ECO:0000314"/>
    <property type="project" value="UniProtKB"/>
</dbReference>
<dbReference type="GO" id="GO:0038023">
    <property type="term" value="F:signaling receptor activity"/>
    <property type="evidence" value="ECO:0000318"/>
    <property type="project" value="GO_Central"/>
</dbReference>
<dbReference type="GO" id="GO:0006953">
    <property type="term" value="P:acute-phase response"/>
    <property type="evidence" value="ECO:0007669"/>
    <property type="project" value="UniProtKB-KW"/>
</dbReference>
<dbReference type="GO" id="GO:0061844">
    <property type="term" value="P:antimicrobial humoral immune response mediated by antimicrobial peptide"/>
    <property type="evidence" value="ECO:0000314"/>
    <property type="project" value="UniProtKB"/>
</dbReference>
<dbReference type="GO" id="GO:0050830">
    <property type="term" value="P:defense response to Gram-positive bacterium"/>
    <property type="evidence" value="ECO:0000250"/>
    <property type="project" value="UniProtKB"/>
</dbReference>
<dbReference type="GO" id="GO:0002755">
    <property type="term" value="P:MyD88-dependent toll-like receptor signaling pathway"/>
    <property type="evidence" value="ECO:0000250"/>
    <property type="project" value="UniProtKB"/>
</dbReference>
<dbReference type="GO" id="GO:0045617">
    <property type="term" value="P:negative regulation of keratinocyte differentiation"/>
    <property type="evidence" value="ECO:0000250"/>
    <property type="project" value="UniProtKB"/>
</dbReference>
<dbReference type="GO" id="GO:0008284">
    <property type="term" value="P:positive regulation of cell population proliferation"/>
    <property type="evidence" value="ECO:0000318"/>
    <property type="project" value="GO_Central"/>
</dbReference>
<dbReference type="GO" id="GO:0010838">
    <property type="term" value="P:positive regulation of keratinocyte proliferation"/>
    <property type="evidence" value="ECO:0000250"/>
    <property type="project" value="UniProtKB"/>
</dbReference>
<dbReference type="GO" id="GO:0090303">
    <property type="term" value="P:positive regulation of wound healing"/>
    <property type="evidence" value="ECO:0000250"/>
    <property type="project" value="UniProtKB"/>
</dbReference>
<dbReference type="GO" id="GO:0043434">
    <property type="term" value="P:response to peptide hormone"/>
    <property type="evidence" value="ECO:0000318"/>
    <property type="project" value="GO_Central"/>
</dbReference>
<dbReference type="CDD" id="cd03594">
    <property type="entry name" value="CLECT_REG-1_like"/>
    <property type="match status" value="1"/>
</dbReference>
<dbReference type="FunFam" id="3.10.100.10:FF:000015">
    <property type="entry name" value="C-type lectin Cal"/>
    <property type="match status" value="1"/>
</dbReference>
<dbReference type="Gene3D" id="3.10.100.10">
    <property type="entry name" value="Mannose-Binding Protein A, subunit A"/>
    <property type="match status" value="1"/>
</dbReference>
<dbReference type="InterPro" id="IPR001304">
    <property type="entry name" value="C-type_lectin-like"/>
</dbReference>
<dbReference type="InterPro" id="IPR016186">
    <property type="entry name" value="C-type_lectin-like/link_sf"/>
</dbReference>
<dbReference type="InterPro" id="IPR050111">
    <property type="entry name" value="C-type_lectin/snaclec_domain"/>
</dbReference>
<dbReference type="InterPro" id="IPR018378">
    <property type="entry name" value="C-type_lectin_CS"/>
</dbReference>
<dbReference type="InterPro" id="IPR016187">
    <property type="entry name" value="CTDL_fold"/>
</dbReference>
<dbReference type="PANTHER" id="PTHR22803">
    <property type="entry name" value="MANNOSE, PHOSPHOLIPASE, LECTIN RECEPTOR RELATED"/>
    <property type="match status" value="1"/>
</dbReference>
<dbReference type="Pfam" id="PF00059">
    <property type="entry name" value="Lectin_C"/>
    <property type="match status" value="1"/>
</dbReference>
<dbReference type="PRINTS" id="PR01504">
    <property type="entry name" value="PNCREATITSAP"/>
</dbReference>
<dbReference type="SMART" id="SM00034">
    <property type="entry name" value="CLECT"/>
    <property type="match status" value="1"/>
</dbReference>
<dbReference type="SUPFAM" id="SSF56436">
    <property type="entry name" value="C-type lectin-like"/>
    <property type="match status" value="1"/>
</dbReference>
<dbReference type="PROSITE" id="PS00615">
    <property type="entry name" value="C_TYPE_LECTIN_1"/>
    <property type="match status" value="1"/>
</dbReference>
<dbReference type="PROSITE" id="PS50041">
    <property type="entry name" value="C_TYPE_LECTIN_2"/>
    <property type="match status" value="1"/>
</dbReference>
<accession>Q6UW15</accession>
<accession>A8K980</accession>
<accession>D6W5J6</accession>
<accession>Q3SYE4</accession>
<accession>Q3SYE6</accession>
<accession>Q6FH18</accession>